<organism>
    <name type="scientific">Nocardioides sp. (strain ATCC BAA-499 / JS614)</name>
    <dbReference type="NCBI Taxonomy" id="196162"/>
    <lineage>
        <taxon>Bacteria</taxon>
        <taxon>Bacillati</taxon>
        <taxon>Actinomycetota</taxon>
        <taxon>Actinomycetes</taxon>
        <taxon>Propionibacteriales</taxon>
        <taxon>Nocardioidaceae</taxon>
        <taxon>Nocardioides</taxon>
    </lineage>
</organism>
<name>RS6_NOCSJ</name>
<evidence type="ECO:0000255" key="1">
    <source>
        <dbReference type="HAMAP-Rule" id="MF_00360"/>
    </source>
</evidence>
<evidence type="ECO:0000305" key="2"/>
<feature type="chain" id="PRO_1000005303" description="Small ribosomal subunit protein bS6">
    <location>
        <begin position="1"/>
        <end position="96"/>
    </location>
</feature>
<protein>
    <recommendedName>
        <fullName evidence="1">Small ribosomal subunit protein bS6</fullName>
    </recommendedName>
    <alternativeName>
        <fullName evidence="2">30S ribosomal protein S6</fullName>
    </alternativeName>
</protein>
<keyword id="KW-1185">Reference proteome</keyword>
<keyword id="KW-0687">Ribonucleoprotein</keyword>
<keyword id="KW-0689">Ribosomal protein</keyword>
<keyword id="KW-0694">RNA-binding</keyword>
<keyword id="KW-0699">rRNA-binding</keyword>
<sequence>MRAYEVMVILDPSLEERTVEPSLDKYLNVIRKDGGTVESVDVWGRRRLAYEVKKNAEGIYAVIKLNAEPATVKEFDRQLTLNESIIRTKVMRPDAH</sequence>
<comment type="function">
    <text evidence="1">Binds together with bS18 to 16S ribosomal RNA.</text>
</comment>
<comment type="similarity">
    <text evidence="1">Belongs to the bacterial ribosomal protein bS6 family.</text>
</comment>
<dbReference type="EMBL" id="CP000509">
    <property type="protein sequence ID" value="ABL84159.1"/>
    <property type="molecule type" value="Genomic_DNA"/>
</dbReference>
<dbReference type="SMR" id="A1SQS4"/>
<dbReference type="STRING" id="196162.Noca_4664"/>
<dbReference type="KEGG" id="nca:Noca_4664"/>
<dbReference type="eggNOG" id="COG0360">
    <property type="taxonomic scope" value="Bacteria"/>
</dbReference>
<dbReference type="HOGENOM" id="CLU_113441_5_3_11"/>
<dbReference type="OrthoDB" id="9812702at2"/>
<dbReference type="Proteomes" id="UP000000640">
    <property type="component" value="Chromosome"/>
</dbReference>
<dbReference type="GO" id="GO:0005737">
    <property type="term" value="C:cytoplasm"/>
    <property type="evidence" value="ECO:0007669"/>
    <property type="project" value="UniProtKB-ARBA"/>
</dbReference>
<dbReference type="GO" id="GO:1990904">
    <property type="term" value="C:ribonucleoprotein complex"/>
    <property type="evidence" value="ECO:0007669"/>
    <property type="project" value="UniProtKB-KW"/>
</dbReference>
<dbReference type="GO" id="GO:0005840">
    <property type="term" value="C:ribosome"/>
    <property type="evidence" value="ECO:0007669"/>
    <property type="project" value="UniProtKB-KW"/>
</dbReference>
<dbReference type="GO" id="GO:0070181">
    <property type="term" value="F:small ribosomal subunit rRNA binding"/>
    <property type="evidence" value="ECO:0007669"/>
    <property type="project" value="TreeGrafter"/>
</dbReference>
<dbReference type="GO" id="GO:0003735">
    <property type="term" value="F:structural constituent of ribosome"/>
    <property type="evidence" value="ECO:0007669"/>
    <property type="project" value="InterPro"/>
</dbReference>
<dbReference type="GO" id="GO:0006412">
    <property type="term" value="P:translation"/>
    <property type="evidence" value="ECO:0007669"/>
    <property type="project" value="UniProtKB-UniRule"/>
</dbReference>
<dbReference type="CDD" id="cd00473">
    <property type="entry name" value="bS6"/>
    <property type="match status" value="1"/>
</dbReference>
<dbReference type="FunFam" id="3.30.70.60:FF:000002">
    <property type="entry name" value="30S ribosomal protein S6"/>
    <property type="match status" value="1"/>
</dbReference>
<dbReference type="Gene3D" id="3.30.70.60">
    <property type="match status" value="1"/>
</dbReference>
<dbReference type="HAMAP" id="MF_00360">
    <property type="entry name" value="Ribosomal_bS6"/>
    <property type="match status" value="1"/>
</dbReference>
<dbReference type="InterPro" id="IPR000529">
    <property type="entry name" value="Ribosomal_bS6"/>
</dbReference>
<dbReference type="InterPro" id="IPR035980">
    <property type="entry name" value="Ribosomal_bS6_sf"/>
</dbReference>
<dbReference type="InterPro" id="IPR020814">
    <property type="entry name" value="Ribosomal_S6_plastid/chlpt"/>
</dbReference>
<dbReference type="InterPro" id="IPR014717">
    <property type="entry name" value="Transl_elong_EF1B/ribsomal_bS6"/>
</dbReference>
<dbReference type="NCBIfam" id="TIGR00166">
    <property type="entry name" value="S6"/>
    <property type="match status" value="1"/>
</dbReference>
<dbReference type="PANTHER" id="PTHR21011">
    <property type="entry name" value="MITOCHONDRIAL 28S RIBOSOMAL PROTEIN S6"/>
    <property type="match status" value="1"/>
</dbReference>
<dbReference type="PANTHER" id="PTHR21011:SF1">
    <property type="entry name" value="SMALL RIBOSOMAL SUBUNIT PROTEIN BS6M"/>
    <property type="match status" value="1"/>
</dbReference>
<dbReference type="Pfam" id="PF01250">
    <property type="entry name" value="Ribosomal_S6"/>
    <property type="match status" value="1"/>
</dbReference>
<dbReference type="SUPFAM" id="SSF54995">
    <property type="entry name" value="Ribosomal protein S6"/>
    <property type="match status" value="1"/>
</dbReference>
<accession>A1SQS4</accession>
<gene>
    <name evidence="1" type="primary">rpsF</name>
    <name type="ordered locus">Noca_4664</name>
</gene>
<reference key="1">
    <citation type="submission" date="2006-12" db="EMBL/GenBank/DDBJ databases">
        <title>Complete sequence of chromosome 1 of Nocardioides sp. JS614.</title>
        <authorList>
            <person name="Copeland A."/>
            <person name="Lucas S."/>
            <person name="Lapidus A."/>
            <person name="Barry K."/>
            <person name="Detter J.C."/>
            <person name="Glavina del Rio T."/>
            <person name="Hammon N."/>
            <person name="Israni S."/>
            <person name="Dalin E."/>
            <person name="Tice H."/>
            <person name="Pitluck S."/>
            <person name="Thompson L.S."/>
            <person name="Brettin T."/>
            <person name="Bruce D."/>
            <person name="Han C."/>
            <person name="Tapia R."/>
            <person name="Schmutz J."/>
            <person name="Larimer F."/>
            <person name="Land M."/>
            <person name="Hauser L."/>
            <person name="Kyrpides N."/>
            <person name="Kim E."/>
            <person name="Mattes T."/>
            <person name="Gossett J."/>
            <person name="Richardson P."/>
        </authorList>
    </citation>
    <scope>NUCLEOTIDE SEQUENCE [LARGE SCALE GENOMIC DNA]</scope>
    <source>
        <strain>ATCC BAA-499 / JS614</strain>
    </source>
</reference>
<proteinExistence type="inferred from homology"/>